<protein>
    <recommendedName>
        <fullName evidence="1">tRNA modification GTPase MnmE</fullName>
        <ecNumber evidence="1">3.6.-.-</ecNumber>
    </recommendedName>
</protein>
<comment type="function">
    <text evidence="1">Exhibits a very high intrinsic GTPase hydrolysis rate. Involved in the addition of a carboxymethylaminomethyl (cmnm) group at the wobble position (U34) of certain tRNAs, forming tRNA-cmnm(5)s(2)U34.</text>
</comment>
<comment type="cofactor">
    <cofactor evidence="1">
        <name>K(+)</name>
        <dbReference type="ChEBI" id="CHEBI:29103"/>
    </cofactor>
    <text evidence="1">Binds 1 potassium ion per subunit.</text>
</comment>
<comment type="subunit">
    <text evidence="1">Homodimer. Heterotetramer of two MnmE and two MnmG subunits.</text>
</comment>
<comment type="subcellular location">
    <subcellularLocation>
        <location evidence="1">Cytoplasm</location>
    </subcellularLocation>
</comment>
<comment type="similarity">
    <text evidence="1">Belongs to the TRAFAC class TrmE-Era-EngA-EngB-Septin-like GTPase superfamily. TrmE GTPase family.</text>
</comment>
<comment type="sequence caution" evidence="2">
    <conflict type="erroneous initiation">
        <sequence resource="EMBL-CDS" id="ABC39420"/>
    </conflict>
</comment>
<keyword id="KW-0963">Cytoplasm</keyword>
<keyword id="KW-0342">GTP-binding</keyword>
<keyword id="KW-0378">Hydrolase</keyword>
<keyword id="KW-0460">Magnesium</keyword>
<keyword id="KW-0479">Metal-binding</keyword>
<keyword id="KW-0547">Nucleotide-binding</keyword>
<keyword id="KW-0630">Potassium</keyword>
<keyword id="KW-0819">tRNA processing</keyword>
<gene>
    <name evidence="1" type="primary">mnmE</name>
    <name evidence="1" type="synonym">trmE</name>
    <name type="ordered locus">BTH_I3233</name>
</gene>
<organism>
    <name type="scientific">Burkholderia thailandensis (strain ATCC 700388 / DSM 13276 / CCUG 48851 / CIP 106301 / E264)</name>
    <dbReference type="NCBI Taxonomy" id="271848"/>
    <lineage>
        <taxon>Bacteria</taxon>
        <taxon>Pseudomonadati</taxon>
        <taxon>Pseudomonadota</taxon>
        <taxon>Betaproteobacteria</taxon>
        <taxon>Burkholderiales</taxon>
        <taxon>Burkholderiaceae</taxon>
        <taxon>Burkholderia</taxon>
        <taxon>pseudomallei group</taxon>
    </lineage>
</organism>
<name>MNME_BURTA</name>
<proteinExistence type="inferred from homology"/>
<dbReference type="EC" id="3.6.-.-" evidence="1"/>
<dbReference type="EMBL" id="CP000086">
    <property type="protein sequence ID" value="ABC39420.1"/>
    <property type="status" value="ALT_INIT"/>
    <property type="molecule type" value="Genomic_DNA"/>
</dbReference>
<dbReference type="RefSeq" id="WP_009910182.1">
    <property type="nucleotide sequence ID" value="NZ_CP008785.1"/>
</dbReference>
<dbReference type="SMR" id="Q2STM2"/>
<dbReference type="GeneID" id="45122911"/>
<dbReference type="KEGG" id="bte:BTH_I3233"/>
<dbReference type="HOGENOM" id="CLU_019624_4_1_4"/>
<dbReference type="Proteomes" id="UP000001930">
    <property type="component" value="Chromosome I"/>
</dbReference>
<dbReference type="GO" id="GO:0005829">
    <property type="term" value="C:cytosol"/>
    <property type="evidence" value="ECO:0007669"/>
    <property type="project" value="TreeGrafter"/>
</dbReference>
<dbReference type="GO" id="GO:0005525">
    <property type="term" value="F:GTP binding"/>
    <property type="evidence" value="ECO:0007669"/>
    <property type="project" value="UniProtKB-UniRule"/>
</dbReference>
<dbReference type="GO" id="GO:0003924">
    <property type="term" value="F:GTPase activity"/>
    <property type="evidence" value="ECO:0007669"/>
    <property type="project" value="UniProtKB-UniRule"/>
</dbReference>
<dbReference type="GO" id="GO:0046872">
    <property type="term" value="F:metal ion binding"/>
    <property type="evidence" value="ECO:0007669"/>
    <property type="project" value="UniProtKB-KW"/>
</dbReference>
<dbReference type="GO" id="GO:0030488">
    <property type="term" value="P:tRNA methylation"/>
    <property type="evidence" value="ECO:0007669"/>
    <property type="project" value="TreeGrafter"/>
</dbReference>
<dbReference type="GO" id="GO:0002098">
    <property type="term" value="P:tRNA wobble uridine modification"/>
    <property type="evidence" value="ECO:0007669"/>
    <property type="project" value="TreeGrafter"/>
</dbReference>
<dbReference type="CDD" id="cd04164">
    <property type="entry name" value="trmE"/>
    <property type="match status" value="1"/>
</dbReference>
<dbReference type="CDD" id="cd14858">
    <property type="entry name" value="TrmE_N"/>
    <property type="match status" value="1"/>
</dbReference>
<dbReference type="Gene3D" id="3.40.50.300">
    <property type="entry name" value="P-loop containing nucleotide triphosphate hydrolases"/>
    <property type="match status" value="1"/>
</dbReference>
<dbReference type="Gene3D" id="3.30.1360.120">
    <property type="entry name" value="Probable tRNA modification gtpase trme, domain 1"/>
    <property type="match status" value="1"/>
</dbReference>
<dbReference type="Gene3D" id="1.20.120.430">
    <property type="entry name" value="tRNA modification GTPase MnmE domain 2"/>
    <property type="match status" value="1"/>
</dbReference>
<dbReference type="HAMAP" id="MF_00379">
    <property type="entry name" value="GTPase_MnmE"/>
    <property type="match status" value="1"/>
</dbReference>
<dbReference type="InterPro" id="IPR031168">
    <property type="entry name" value="G_TrmE"/>
</dbReference>
<dbReference type="InterPro" id="IPR006073">
    <property type="entry name" value="GTP-bd"/>
</dbReference>
<dbReference type="InterPro" id="IPR018948">
    <property type="entry name" value="GTP-bd_TrmE_N"/>
</dbReference>
<dbReference type="InterPro" id="IPR004520">
    <property type="entry name" value="GTPase_MnmE"/>
</dbReference>
<dbReference type="InterPro" id="IPR027368">
    <property type="entry name" value="MnmE_dom2"/>
</dbReference>
<dbReference type="InterPro" id="IPR025867">
    <property type="entry name" value="MnmE_helical"/>
</dbReference>
<dbReference type="InterPro" id="IPR027417">
    <property type="entry name" value="P-loop_NTPase"/>
</dbReference>
<dbReference type="InterPro" id="IPR005225">
    <property type="entry name" value="Small_GTP-bd"/>
</dbReference>
<dbReference type="InterPro" id="IPR027266">
    <property type="entry name" value="TrmE/GcvT_dom1"/>
</dbReference>
<dbReference type="NCBIfam" id="TIGR00450">
    <property type="entry name" value="mnmE_trmE_thdF"/>
    <property type="match status" value="1"/>
</dbReference>
<dbReference type="NCBIfam" id="NF003661">
    <property type="entry name" value="PRK05291.1-3"/>
    <property type="match status" value="1"/>
</dbReference>
<dbReference type="NCBIfam" id="TIGR00231">
    <property type="entry name" value="small_GTP"/>
    <property type="match status" value="1"/>
</dbReference>
<dbReference type="PANTHER" id="PTHR42714">
    <property type="entry name" value="TRNA MODIFICATION GTPASE GTPBP3"/>
    <property type="match status" value="1"/>
</dbReference>
<dbReference type="PANTHER" id="PTHR42714:SF2">
    <property type="entry name" value="TRNA MODIFICATION GTPASE GTPBP3, MITOCHONDRIAL"/>
    <property type="match status" value="1"/>
</dbReference>
<dbReference type="Pfam" id="PF01926">
    <property type="entry name" value="MMR_HSR1"/>
    <property type="match status" value="1"/>
</dbReference>
<dbReference type="Pfam" id="PF12631">
    <property type="entry name" value="MnmE_helical"/>
    <property type="match status" value="1"/>
</dbReference>
<dbReference type="Pfam" id="PF10396">
    <property type="entry name" value="TrmE_N"/>
    <property type="match status" value="1"/>
</dbReference>
<dbReference type="PRINTS" id="PR00326">
    <property type="entry name" value="GTP1OBG"/>
</dbReference>
<dbReference type="SUPFAM" id="SSF52540">
    <property type="entry name" value="P-loop containing nucleoside triphosphate hydrolases"/>
    <property type="match status" value="1"/>
</dbReference>
<dbReference type="PROSITE" id="PS51709">
    <property type="entry name" value="G_TRME"/>
    <property type="match status" value="1"/>
</dbReference>
<feature type="chain" id="PRO_0000345749" description="tRNA modification GTPase MnmE">
    <location>
        <begin position="1"/>
        <end position="467"/>
    </location>
</feature>
<feature type="domain" description="TrmE-type G">
    <location>
        <begin position="226"/>
        <end position="389"/>
    </location>
</feature>
<feature type="binding site" evidence="1">
    <location>
        <position position="25"/>
    </location>
    <ligand>
        <name>(6S)-5-formyl-5,6,7,8-tetrahydrofolate</name>
        <dbReference type="ChEBI" id="CHEBI:57457"/>
    </ligand>
</feature>
<feature type="binding site" evidence="1">
    <location>
        <position position="87"/>
    </location>
    <ligand>
        <name>(6S)-5-formyl-5,6,7,8-tetrahydrofolate</name>
        <dbReference type="ChEBI" id="CHEBI:57457"/>
    </ligand>
</feature>
<feature type="binding site" evidence="1">
    <location>
        <position position="130"/>
    </location>
    <ligand>
        <name>(6S)-5-formyl-5,6,7,8-tetrahydrofolate</name>
        <dbReference type="ChEBI" id="CHEBI:57457"/>
    </ligand>
</feature>
<feature type="binding site" evidence="1">
    <location>
        <begin position="236"/>
        <end position="241"/>
    </location>
    <ligand>
        <name>GTP</name>
        <dbReference type="ChEBI" id="CHEBI:37565"/>
    </ligand>
</feature>
<feature type="binding site" evidence="1">
    <location>
        <position position="236"/>
    </location>
    <ligand>
        <name>K(+)</name>
        <dbReference type="ChEBI" id="CHEBI:29103"/>
    </ligand>
</feature>
<feature type="binding site" evidence="1">
    <location>
        <position position="240"/>
    </location>
    <ligand>
        <name>Mg(2+)</name>
        <dbReference type="ChEBI" id="CHEBI:18420"/>
    </ligand>
</feature>
<feature type="binding site" evidence="1">
    <location>
        <begin position="255"/>
        <end position="261"/>
    </location>
    <ligand>
        <name>GTP</name>
        <dbReference type="ChEBI" id="CHEBI:37565"/>
    </ligand>
</feature>
<feature type="binding site" evidence="1">
    <location>
        <position position="255"/>
    </location>
    <ligand>
        <name>K(+)</name>
        <dbReference type="ChEBI" id="CHEBI:29103"/>
    </ligand>
</feature>
<feature type="binding site" evidence="1">
    <location>
        <position position="257"/>
    </location>
    <ligand>
        <name>K(+)</name>
        <dbReference type="ChEBI" id="CHEBI:29103"/>
    </ligand>
</feature>
<feature type="binding site" evidence="1">
    <location>
        <position position="260"/>
    </location>
    <ligand>
        <name>K(+)</name>
        <dbReference type="ChEBI" id="CHEBI:29103"/>
    </ligand>
</feature>
<feature type="binding site" evidence="1">
    <location>
        <position position="261"/>
    </location>
    <ligand>
        <name>Mg(2+)</name>
        <dbReference type="ChEBI" id="CHEBI:18420"/>
    </ligand>
</feature>
<feature type="binding site" evidence="1">
    <location>
        <begin position="280"/>
        <end position="283"/>
    </location>
    <ligand>
        <name>GTP</name>
        <dbReference type="ChEBI" id="CHEBI:37565"/>
    </ligand>
</feature>
<feature type="binding site" evidence="1">
    <location>
        <position position="467"/>
    </location>
    <ligand>
        <name>(6S)-5-formyl-5,6,7,8-tetrahydrofolate</name>
        <dbReference type="ChEBI" id="CHEBI:57457"/>
    </ligand>
</feature>
<evidence type="ECO:0000255" key="1">
    <source>
        <dbReference type="HAMAP-Rule" id="MF_00379"/>
    </source>
</evidence>
<evidence type="ECO:0000305" key="2"/>
<reference key="1">
    <citation type="journal article" date="2005" name="BMC Genomics">
        <title>Bacterial genome adaptation to niches: divergence of the potential virulence genes in three Burkholderia species of different survival strategies.</title>
        <authorList>
            <person name="Kim H.S."/>
            <person name="Schell M.A."/>
            <person name="Yu Y."/>
            <person name="Ulrich R.L."/>
            <person name="Sarria S.H."/>
            <person name="Nierman W.C."/>
            <person name="DeShazer D."/>
        </authorList>
    </citation>
    <scope>NUCLEOTIDE SEQUENCE [LARGE SCALE GENOMIC DNA]</scope>
    <source>
        <strain>ATCC 700388 / DSM 13276 / CCUG 48851 / CIP 106301 / E264</strain>
    </source>
</reference>
<accession>Q2STM2</accession>
<sequence>MLATDSDPIVAIATASGRGGIGVVRISLGRAGEAAALALSDALCGARLTPRHASYVPFLDGAGEPLDRGIALYFPAPHSYTGEHVLELQGHGGPIVLQLVLQRCLDAGRAYGLRLAEPGEFTRRAFLNDKLDLAQAEAVADLIEASTEAAARSAGRSLDGAFSRDIHALVDDVIALRMLVEATLDFPEEEIDFLEAADARGKLAHIRERLAHVLGDARQGALLREGLSVVLAGQPNVGKSSLLNALAGAELAIVTPIAGTTRDKVAQTIQVEGIPLHIIDTAGLRETEDEVEKIGIARTWGEIERADVVLHLLDARSGLGPDDEAIAARFPAGVPVVRVLNKTDLTEAPASVARVGSGAERADLCEVRLSAKRGDGIDLLRGELLRIAGWQAGAESVYLARERHLIALRAAQAHVARAAEHADQNAQALDLFAEELRLAQEQLNSITGEFSSDDLLGVIFSRFCIGK</sequence>